<feature type="signal peptide" evidence="1">
    <location>
        <begin position="1"/>
        <end position="36"/>
    </location>
</feature>
<feature type="chain" id="PRO_0000359584" description="Serine protease SplF">
    <location>
        <begin position="37"/>
        <end position="239"/>
    </location>
</feature>
<feature type="active site" description="Charge relay system" evidence="1">
    <location>
        <position position="75"/>
    </location>
</feature>
<feature type="active site" description="Charge relay system" evidence="1">
    <location>
        <position position="114"/>
    </location>
</feature>
<feature type="active site" description="Charge relay system" evidence="1">
    <location>
        <position position="192"/>
    </location>
</feature>
<accession>Q7A4Y4</accession>
<organism>
    <name type="scientific">Staphylococcus aureus (strain N315)</name>
    <dbReference type="NCBI Taxonomy" id="158879"/>
    <lineage>
        <taxon>Bacteria</taxon>
        <taxon>Bacillati</taxon>
        <taxon>Bacillota</taxon>
        <taxon>Bacilli</taxon>
        <taxon>Bacillales</taxon>
        <taxon>Staphylococcaceae</taxon>
        <taxon>Staphylococcus</taxon>
    </lineage>
</organism>
<proteinExistence type="inferred from homology"/>
<sequence>MNKNIIIKSIAALTILTSVTGVGTTMVEGIQQTAKAENTVKQITNTNVAPYSGVTWMGAGTGFVVGNHTIITNKHVTYHMKVGDEIKAHPNGFYNNGGGLYKVTKIVDYPGKEDIAVVQVEEKSTQPKGRKFKDFTSKFNIASEAKENEPISVIGYPNPNGNKLQMYESTGKVLSVNGNIVSSDAIIQPGSSGSPILNSKHEAIGVIYAGNKPSGESTRGFAVYFSPEIKKFIADNLDK</sequence>
<gene>
    <name type="primary">splF</name>
    <name type="ordered locus">SA1627</name>
</gene>
<protein>
    <recommendedName>
        <fullName>Serine protease SplF</fullName>
        <ecNumber>3.4.21.-</ecNumber>
    </recommendedName>
</protein>
<keyword id="KW-0378">Hydrolase</keyword>
<keyword id="KW-0645">Protease</keyword>
<keyword id="KW-0964">Secreted</keyword>
<keyword id="KW-0720">Serine protease</keyword>
<keyword id="KW-0732">Signal</keyword>
<reference key="1">
    <citation type="journal article" date="2001" name="Lancet">
        <title>Whole genome sequencing of meticillin-resistant Staphylococcus aureus.</title>
        <authorList>
            <person name="Kuroda M."/>
            <person name="Ohta T."/>
            <person name="Uchiyama I."/>
            <person name="Baba T."/>
            <person name="Yuzawa H."/>
            <person name="Kobayashi I."/>
            <person name="Cui L."/>
            <person name="Oguchi A."/>
            <person name="Aoki K."/>
            <person name="Nagai Y."/>
            <person name="Lian J.-Q."/>
            <person name="Ito T."/>
            <person name="Kanamori M."/>
            <person name="Matsumaru H."/>
            <person name="Maruyama A."/>
            <person name="Murakami H."/>
            <person name="Hosoyama A."/>
            <person name="Mizutani-Ui Y."/>
            <person name="Takahashi N.K."/>
            <person name="Sawano T."/>
            <person name="Inoue R."/>
            <person name="Kaito C."/>
            <person name="Sekimizu K."/>
            <person name="Hirakawa H."/>
            <person name="Kuhara S."/>
            <person name="Goto S."/>
            <person name="Yabuzaki J."/>
            <person name="Kanehisa M."/>
            <person name="Yamashita A."/>
            <person name="Oshima K."/>
            <person name="Furuya K."/>
            <person name="Yoshino C."/>
            <person name="Shiba T."/>
            <person name="Hattori M."/>
            <person name="Ogasawara N."/>
            <person name="Hayashi H."/>
            <person name="Hiramatsu K."/>
        </authorList>
    </citation>
    <scope>NUCLEOTIDE SEQUENCE [LARGE SCALE GENOMIC DNA]</scope>
    <source>
        <strain>N315</strain>
    </source>
</reference>
<dbReference type="EC" id="3.4.21.-"/>
<dbReference type="EMBL" id="BA000018">
    <property type="protein sequence ID" value="BAB42895.1"/>
    <property type="molecule type" value="Genomic_DNA"/>
</dbReference>
<dbReference type="PIR" id="H89966">
    <property type="entry name" value="H89966"/>
</dbReference>
<dbReference type="RefSeq" id="WP_001038752.1">
    <property type="nucleotide sequence ID" value="NC_002745.2"/>
</dbReference>
<dbReference type="SMR" id="Q7A4Y4"/>
<dbReference type="MEROPS" id="S01.526"/>
<dbReference type="EnsemblBacteria" id="BAB42895">
    <property type="protein sequence ID" value="BAB42895"/>
    <property type="gene ID" value="BAB42895"/>
</dbReference>
<dbReference type="KEGG" id="sau:SA1627"/>
<dbReference type="HOGENOM" id="CLU_073589_2_0_9"/>
<dbReference type="GO" id="GO:0005576">
    <property type="term" value="C:extracellular region"/>
    <property type="evidence" value="ECO:0007669"/>
    <property type="project" value="UniProtKB-SubCell"/>
</dbReference>
<dbReference type="GO" id="GO:0008236">
    <property type="term" value="F:serine-type peptidase activity"/>
    <property type="evidence" value="ECO:0007669"/>
    <property type="project" value="UniProtKB-KW"/>
</dbReference>
<dbReference type="GO" id="GO:0006508">
    <property type="term" value="P:proteolysis"/>
    <property type="evidence" value="ECO:0007669"/>
    <property type="project" value="UniProtKB-KW"/>
</dbReference>
<dbReference type="Gene3D" id="2.40.10.10">
    <property type="entry name" value="Trypsin-like serine proteases"/>
    <property type="match status" value="2"/>
</dbReference>
<dbReference type="InterPro" id="IPR009003">
    <property type="entry name" value="Peptidase_S1_PA"/>
</dbReference>
<dbReference type="InterPro" id="IPR043504">
    <property type="entry name" value="Peptidase_S1_PA_chymotrypsin"/>
</dbReference>
<dbReference type="InterPro" id="IPR008256">
    <property type="entry name" value="Peptidase_S1B"/>
</dbReference>
<dbReference type="InterPro" id="IPR028301">
    <property type="entry name" value="V8_his_AS"/>
</dbReference>
<dbReference type="PANTHER" id="PTHR43019:SF23">
    <property type="entry name" value="PROTEASE DO-LIKE 5, CHLOROPLASTIC"/>
    <property type="match status" value="1"/>
</dbReference>
<dbReference type="PANTHER" id="PTHR43019">
    <property type="entry name" value="SERINE ENDOPROTEASE DEGS"/>
    <property type="match status" value="1"/>
</dbReference>
<dbReference type="Pfam" id="PF13365">
    <property type="entry name" value="Trypsin_2"/>
    <property type="match status" value="1"/>
</dbReference>
<dbReference type="PRINTS" id="PR00839">
    <property type="entry name" value="V8PROTEASE"/>
</dbReference>
<dbReference type="SUPFAM" id="SSF50494">
    <property type="entry name" value="Trypsin-like serine proteases"/>
    <property type="match status" value="1"/>
</dbReference>
<dbReference type="PROSITE" id="PS00672">
    <property type="entry name" value="V8_HIS"/>
    <property type="match status" value="1"/>
</dbReference>
<name>SPLF_STAAN</name>
<evidence type="ECO:0000250" key="1"/>
<evidence type="ECO:0000305" key="2"/>
<comment type="subcellular location">
    <subcellularLocation>
        <location evidence="1">Secreted</location>
    </subcellularLocation>
</comment>
<comment type="similarity">
    <text evidence="2">Belongs to the peptidase S1B family.</text>
</comment>